<protein>
    <recommendedName>
        <fullName evidence="1">Large ribosomal subunit protein uL1</fullName>
    </recommendedName>
    <alternativeName>
        <fullName evidence="2">50S ribosomal protein L1</fullName>
    </alternativeName>
</protein>
<evidence type="ECO:0000255" key="1">
    <source>
        <dbReference type="HAMAP-Rule" id="MF_01318"/>
    </source>
</evidence>
<evidence type="ECO:0000305" key="2"/>
<gene>
    <name evidence="1" type="primary">rpl1</name>
    <name type="ordered locus">Ta0360</name>
</gene>
<feature type="chain" id="PRO_0000125815" description="Large ribosomal subunit protein uL1">
    <location>
        <begin position="1"/>
        <end position="217"/>
    </location>
</feature>
<organism>
    <name type="scientific">Thermoplasma acidophilum (strain ATCC 25905 / DSM 1728 / JCM 9062 / NBRC 15155 / AMRC-C165)</name>
    <dbReference type="NCBI Taxonomy" id="273075"/>
    <lineage>
        <taxon>Archaea</taxon>
        <taxon>Methanobacteriati</taxon>
        <taxon>Thermoplasmatota</taxon>
        <taxon>Thermoplasmata</taxon>
        <taxon>Thermoplasmatales</taxon>
        <taxon>Thermoplasmataceae</taxon>
        <taxon>Thermoplasma</taxon>
    </lineage>
</organism>
<sequence length="217" mass="23911">MNINDVKRAVSEIKEKSPQRKFEESVEIAVNLKDVDMSNPKNRINEEILLPNGRGKDVKIAVFGSDELKSKARGVADFVFGAEDISKFAEDKKAFKKIVNQAYFFIAEATLMANIGKSLGQVLGPRGKMPRPIPPGQDPAPLIKNLKNTVKARSRNALTFHVPVGTRSMDADKISENIMTVINRITGKLERGASNIRSIYVKTTMGNAVEIKAGDEK</sequence>
<proteinExistence type="inferred from homology"/>
<comment type="function">
    <text evidence="1">Binds directly to 23S rRNA. Probably involved in E site tRNA release.</text>
</comment>
<comment type="function">
    <text evidence="1">Protein L1 is also a translational repressor protein, it controls the translation of its operon by binding to its mRNA.</text>
</comment>
<comment type="subunit">
    <text evidence="1">Part of the 50S ribosomal subunit.</text>
</comment>
<comment type="similarity">
    <text evidence="1">Belongs to the universal ribosomal protein uL1 family.</text>
</comment>
<accession>Q9HL71</accession>
<dbReference type="EMBL" id="AL445064">
    <property type="protein sequence ID" value="CAC11504.1"/>
    <property type="molecule type" value="Genomic_DNA"/>
</dbReference>
<dbReference type="RefSeq" id="WP_010900788.1">
    <property type="nucleotide sequence ID" value="NC_002578.1"/>
</dbReference>
<dbReference type="SMR" id="Q9HL71"/>
<dbReference type="FunCoup" id="Q9HL71">
    <property type="interactions" value="138"/>
</dbReference>
<dbReference type="STRING" id="273075.gene:9571578"/>
<dbReference type="PaxDb" id="273075-Ta0360"/>
<dbReference type="EnsemblBacteria" id="CAC11504">
    <property type="protein sequence ID" value="CAC11504"/>
    <property type="gene ID" value="CAC11504"/>
</dbReference>
<dbReference type="KEGG" id="tac:Ta0360"/>
<dbReference type="eggNOG" id="arCOG04289">
    <property type="taxonomic scope" value="Archaea"/>
</dbReference>
<dbReference type="HOGENOM" id="CLU_062853_4_0_2"/>
<dbReference type="InParanoid" id="Q9HL71"/>
<dbReference type="OrthoDB" id="10382at2157"/>
<dbReference type="Proteomes" id="UP000001024">
    <property type="component" value="Chromosome"/>
</dbReference>
<dbReference type="GO" id="GO:0015934">
    <property type="term" value="C:large ribosomal subunit"/>
    <property type="evidence" value="ECO:0007669"/>
    <property type="project" value="InterPro"/>
</dbReference>
<dbReference type="GO" id="GO:0019843">
    <property type="term" value="F:rRNA binding"/>
    <property type="evidence" value="ECO:0007669"/>
    <property type="project" value="UniProtKB-UniRule"/>
</dbReference>
<dbReference type="GO" id="GO:0003735">
    <property type="term" value="F:structural constituent of ribosome"/>
    <property type="evidence" value="ECO:0007669"/>
    <property type="project" value="InterPro"/>
</dbReference>
<dbReference type="GO" id="GO:0000049">
    <property type="term" value="F:tRNA binding"/>
    <property type="evidence" value="ECO:0007669"/>
    <property type="project" value="UniProtKB-KW"/>
</dbReference>
<dbReference type="GO" id="GO:0006417">
    <property type="term" value="P:regulation of translation"/>
    <property type="evidence" value="ECO:0007669"/>
    <property type="project" value="UniProtKB-KW"/>
</dbReference>
<dbReference type="GO" id="GO:0006412">
    <property type="term" value="P:translation"/>
    <property type="evidence" value="ECO:0007669"/>
    <property type="project" value="UniProtKB-UniRule"/>
</dbReference>
<dbReference type="CDD" id="cd00403">
    <property type="entry name" value="Ribosomal_L1"/>
    <property type="match status" value="1"/>
</dbReference>
<dbReference type="FunFam" id="3.40.50.790:FF:000005">
    <property type="entry name" value="50S ribosomal protein L1"/>
    <property type="match status" value="1"/>
</dbReference>
<dbReference type="Gene3D" id="3.30.190.20">
    <property type="match status" value="1"/>
</dbReference>
<dbReference type="Gene3D" id="3.40.50.790">
    <property type="match status" value="1"/>
</dbReference>
<dbReference type="HAMAP" id="MF_01318_A">
    <property type="entry name" value="Ribosomal_uL1_A"/>
    <property type="match status" value="1"/>
</dbReference>
<dbReference type="InterPro" id="IPR002143">
    <property type="entry name" value="Ribosomal_uL1"/>
</dbReference>
<dbReference type="InterPro" id="IPR023674">
    <property type="entry name" value="Ribosomal_uL1-like"/>
</dbReference>
<dbReference type="InterPro" id="IPR028364">
    <property type="entry name" value="Ribosomal_uL1/biogenesis"/>
</dbReference>
<dbReference type="InterPro" id="IPR016095">
    <property type="entry name" value="Ribosomal_uL1_3-a/b-sand"/>
</dbReference>
<dbReference type="InterPro" id="IPR023669">
    <property type="entry name" value="Ribosomal_uL1_arc"/>
</dbReference>
<dbReference type="InterPro" id="IPR023673">
    <property type="entry name" value="Ribosomal_uL1_CS"/>
</dbReference>
<dbReference type="NCBIfam" id="NF003244">
    <property type="entry name" value="PRK04203.1"/>
    <property type="match status" value="1"/>
</dbReference>
<dbReference type="PANTHER" id="PTHR36427">
    <property type="entry name" value="54S RIBOSOMAL PROTEIN L1, MITOCHONDRIAL"/>
    <property type="match status" value="1"/>
</dbReference>
<dbReference type="PANTHER" id="PTHR36427:SF3">
    <property type="entry name" value="LARGE RIBOSOMAL SUBUNIT PROTEIN UL1M"/>
    <property type="match status" value="1"/>
</dbReference>
<dbReference type="Pfam" id="PF00687">
    <property type="entry name" value="Ribosomal_L1"/>
    <property type="match status" value="1"/>
</dbReference>
<dbReference type="PIRSF" id="PIRSF002155">
    <property type="entry name" value="Ribosomal_L1"/>
    <property type="match status" value="1"/>
</dbReference>
<dbReference type="SUPFAM" id="SSF56808">
    <property type="entry name" value="Ribosomal protein L1"/>
    <property type="match status" value="1"/>
</dbReference>
<dbReference type="PROSITE" id="PS01199">
    <property type="entry name" value="RIBOSOMAL_L1"/>
    <property type="match status" value="1"/>
</dbReference>
<keyword id="KW-1185">Reference proteome</keyword>
<keyword id="KW-0678">Repressor</keyword>
<keyword id="KW-0687">Ribonucleoprotein</keyword>
<keyword id="KW-0689">Ribosomal protein</keyword>
<keyword id="KW-0694">RNA-binding</keyword>
<keyword id="KW-0699">rRNA-binding</keyword>
<keyword id="KW-0810">Translation regulation</keyword>
<keyword id="KW-0820">tRNA-binding</keyword>
<reference key="1">
    <citation type="journal article" date="2000" name="Nature">
        <title>The genome sequence of the thermoacidophilic scavenger Thermoplasma acidophilum.</title>
        <authorList>
            <person name="Ruepp A."/>
            <person name="Graml W."/>
            <person name="Santos-Martinez M.-L."/>
            <person name="Koretke K.K."/>
            <person name="Volker C."/>
            <person name="Mewes H.-W."/>
            <person name="Frishman D."/>
            <person name="Stocker S."/>
            <person name="Lupas A.N."/>
            <person name="Baumeister W."/>
        </authorList>
    </citation>
    <scope>NUCLEOTIDE SEQUENCE [LARGE SCALE GENOMIC DNA]</scope>
    <source>
        <strain>ATCC 25905 / DSM 1728 / JCM 9062 / NBRC 15155 / AMRC-C165</strain>
    </source>
</reference>
<name>RL1_THEAC</name>